<dbReference type="EC" id="4.2.1.9" evidence="1"/>
<dbReference type="EMBL" id="CP000462">
    <property type="protein sequence ID" value="ABK36292.1"/>
    <property type="status" value="ALT_INIT"/>
    <property type="molecule type" value="Genomic_DNA"/>
</dbReference>
<dbReference type="RefSeq" id="WP_024945527.1">
    <property type="nucleotide sequence ID" value="NC_008570.1"/>
</dbReference>
<dbReference type="RefSeq" id="YP_858625.1">
    <property type="nucleotide sequence ID" value="NC_008570.1"/>
</dbReference>
<dbReference type="SMR" id="A0KQS4"/>
<dbReference type="STRING" id="380703.AHA_4202"/>
<dbReference type="EnsemblBacteria" id="ABK36292">
    <property type="protein sequence ID" value="ABK36292"/>
    <property type="gene ID" value="AHA_4202"/>
</dbReference>
<dbReference type="GeneID" id="4489856"/>
<dbReference type="KEGG" id="aha:AHA_4202"/>
<dbReference type="PATRIC" id="fig|380703.7.peg.4157"/>
<dbReference type="eggNOG" id="COG0129">
    <property type="taxonomic scope" value="Bacteria"/>
</dbReference>
<dbReference type="HOGENOM" id="CLU_014271_4_3_6"/>
<dbReference type="OrthoDB" id="9807077at2"/>
<dbReference type="UniPathway" id="UPA00047">
    <property type="reaction ID" value="UER00057"/>
</dbReference>
<dbReference type="UniPathway" id="UPA00049">
    <property type="reaction ID" value="UER00061"/>
</dbReference>
<dbReference type="Proteomes" id="UP000000756">
    <property type="component" value="Chromosome"/>
</dbReference>
<dbReference type="GO" id="GO:0005829">
    <property type="term" value="C:cytosol"/>
    <property type="evidence" value="ECO:0007669"/>
    <property type="project" value="TreeGrafter"/>
</dbReference>
<dbReference type="GO" id="GO:0051537">
    <property type="term" value="F:2 iron, 2 sulfur cluster binding"/>
    <property type="evidence" value="ECO:0007669"/>
    <property type="project" value="UniProtKB-UniRule"/>
</dbReference>
<dbReference type="GO" id="GO:0004160">
    <property type="term" value="F:dihydroxy-acid dehydratase activity"/>
    <property type="evidence" value="ECO:0007669"/>
    <property type="project" value="UniProtKB-UniRule"/>
</dbReference>
<dbReference type="GO" id="GO:0000287">
    <property type="term" value="F:magnesium ion binding"/>
    <property type="evidence" value="ECO:0007669"/>
    <property type="project" value="UniProtKB-UniRule"/>
</dbReference>
<dbReference type="GO" id="GO:0009097">
    <property type="term" value="P:isoleucine biosynthetic process"/>
    <property type="evidence" value="ECO:0007669"/>
    <property type="project" value="UniProtKB-UniRule"/>
</dbReference>
<dbReference type="GO" id="GO:0009099">
    <property type="term" value="P:L-valine biosynthetic process"/>
    <property type="evidence" value="ECO:0007669"/>
    <property type="project" value="UniProtKB-UniRule"/>
</dbReference>
<dbReference type="FunFam" id="3.50.30.80:FF:000001">
    <property type="entry name" value="Dihydroxy-acid dehydratase"/>
    <property type="match status" value="1"/>
</dbReference>
<dbReference type="Gene3D" id="3.50.30.80">
    <property type="entry name" value="IlvD/EDD C-terminal domain-like"/>
    <property type="match status" value="1"/>
</dbReference>
<dbReference type="HAMAP" id="MF_00012">
    <property type="entry name" value="IlvD"/>
    <property type="match status" value="1"/>
</dbReference>
<dbReference type="InterPro" id="IPR042096">
    <property type="entry name" value="Dihydro-acid_dehy_C"/>
</dbReference>
<dbReference type="InterPro" id="IPR004404">
    <property type="entry name" value="DihydroxyA_deHydtase"/>
</dbReference>
<dbReference type="InterPro" id="IPR020558">
    <property type="entry name" value="DiOHA_6PGluconate_deHydtase_CS"/>
</dbReference>
<dbReference type="InterPro" id="IPR056740">
    <property type="entry name" value="ILV_EDD_C"/>
</dbReference>
<dbReference type="InterPro" id="IPR000581">
    <property type="entry name" value="ILV_EDD_N"/>
</dbReference>
<dbReference type="InterPro" id="IPR037237">
    <property type="entry name" value="IlvD/EDD_N"/>
</dbReference>
<dbReference type="NCBIfam" id="TIGR00110">
    <property type="entry name" value="ilvD"/>
    <property type="match status" value="1"/>
</dbReference>
<dbReference type="NCBIfam" id="NF009103">
    <property type="entry name" value="PRK12448.1"/>
    <property type="match status" value="1"/>
</dbReference>
<dbReference type="PANTHER" id="PTHR43661">
    <property type="entry name" value="D-XYLONATE DEHYDRATASE"/>
    <property type="match status" value="1"/>
</dbReference>
<dbReference type="PANTHER" id="PTHR43661:SF3">
    <property type="entry name" value="D-XYLONATE DEHYDRATASE YAGF-RELATED"/>
    <property type="match status" value="1"/>
</dbReference>
<dbReference type="Pfam" id="PF24877">
    <property type="entry name" value="ILV_EDD_C"/>
    <property type="match status" value="1"/>
</dbReference>
<dbReference type="Pfam" id="PF00920">
    <property type="entry name" value="ILVD_EDD_N"/>
    <property type="match status" value="1"/>
</dbReference>
<dbReference type="SUPFAM" id="SSF143975">
    <property type="entry name" value="IlvD/EDD N-terminal domain-like"/>
    <property type="match status" value="1"/>
</dbReference>
<dbReference type="SUPFAM" id="SSF52016">
    <property type="entry name" value="LeuD/IlvD-like"/>
    <property type="match status" value="1"/>
</dbReference>
<dbReference type="PROSITE" id="PS00886">
    <property type="entry name" value="ILVD_EDD_1"/>
    <property type="match status" value="1"/>
</dbReference>
<dbReference type="PROSITE" id="PS00887">
    <property type="entry name" value="ILVD_EDD_2"/>
    <property type="match status" value="1"/>
</dbReference>
<name>ILVD_AERHH</name>
<protein>
    <recommendedName>
        <fullName evidence="1">Dihydroxy-acid dehydratase</fullName>
        <shortName evidence="1">DAD</shortName>
        <ecNumber evidence="1">4.2.1.9</ecNumber>
    </recommendedName>
</protein>
<organism>
    <name type="scientific">Aeromonas hydrophila subsp. hydrophila (strain ATCC 7966 / DSM 30187 / BCRC 13018 / CCUG 14551 / JCM 1027 / KCTC 2358 / NCIMB 9240 / NCTC 8049)</name>
    <dbReference type="NCBI Taxonomy" id="380703"/>
    <lineage>
        <taxon>Bacteria</taxon>
        <taxon>Pseudomonadati</taxon>
        <taxon>Pseudomonadota</taxon>
        <taxon>Gammaproteobacteria</taxon>
        <taxon>Aeromonadales</taxon>
        <taxon>Aeromonadaceae</taxon>
        <taxon>Aeromonas</taxon>
    </lineage>
</organism>
<accession>A0KQS4</accession>
<proteinExistence type="inferred from homology"/>
<gene>
    <name evidence="1" type="primary">ilvD</name>
    <name type="ordered locus">AHA_4202</name>
</gene>
<reference key="1">
    <citation type="journal article" date="2006" name="J. Bacteriol.">
        <title>Genome sequence of Aeromonas hydrophila ATCC 7966T: jack of all trades.</title>
        <authorList>
            <person name="Seshadri R."/>
            <person name="Joseph S.W."/>
            <person name="Chopra A.K."/>
            <person name="Sha J."/>
            <person name="Shaw J."/>
            <person name="Graf J."/>
            <person name="Haft D.H."/>
            <person name="Wu M."/>
            <person name="Ren Q."/>
            <person name="Rosovitz M.J."/>
            <person name="Madupu R."/>
            <person name="Tallon L."/>
            <person name="Kim M."/>
            <person name="Jin S."/>
            <person name="Vuong H."/>
            <person name="Stine O.C."/>
            <person name="Ali A."/>
            <person name="Horneman A.J."/>
            <person name="Heidelberg J.F."/>
        </authorList>
    </citation>
    <scope>NUCLEOTIDE SEQUENCE [LARGE SCALE GENOMIC DNA]</scope>
    <source>
        <strain>ATCC 7966 / DSM 30187 / BCRC 13018 / CCUG 14551 / JCM 1027 / KCTC 2358 / NCIMB 9240 / NCTC 8049</strain>
    </source>
</reference>
<keyword id="KW-0001">2Fe-2S</keyword>
<keyword id="KW-0028">Amino-acid biosynthesis</keyword>
<keyword id="KW-0100">Branched-chain amino acid biosynthesis</keyword>
<keyword id="KW-0408">Iron</keyword>
<keyword id="KW-0411">Iron-sulfur</keyword>
<keyword id="KW-0456">Lyase</keyword>
<keyword id="KW-0460">Magnesium</keyword>
<keyword id="KW-0479">Metal-binding</keyword>
<keyword id="KW-1185">Reference proteome</keyword>
<sequence length="613" mass="65036">MPKLRSATTTHGRNMAGARALWRATGMTDQDFGKPIIAVVNSFTQFVPGHVHLKDLGQLVAREIEAAGGVAKEFNTIAVDDGIAMGHGGMLYSLPSRELIADSVEYMVNAHCADAMVCISNCDKITPGMLMAALRINIPVIFVSGGPMEAGKTKLSDQIIKLDLVDAMIQGADPKVSDAQSEQVERSACPTCGSCSGMFTANSMNCLTEALGLSQPGNGSLLATHSDREQLFKLAGQRIVTLAKRWYEQDDASALPRNIATKAAFENAMALDIAMGGSTNTVLHLLAAAQEAGVDFTMADIDRMSRKVPQLCKVAPSTQKYHMEDVHRAGGVVAILGQLEKAGLVHGDTRNVLGTSLVELLAEYDVSRQPSQEVVDFYRAGPAGIRTTKAFSQDCRWPELDLDRAEGCIRSLDNAYSLEGGLAVLAGNLALNGAIVKTAGVDEENLTFRGPARVFESQDTAVAGILDGTVKAGEVVVIRYEGPKGGPGMQEMLYPTTYLKSMGLGKACALITDGRFSGGTSGLSIGHVSPEAASGGTIGLVEDGDIINIDIPARSMVLEVADSVLAARRVAVEARGWKPLDRQRQVSFALRAYAMFATSADKGAVRDRSMLGE</sequence>
<feature type="chain" id="PRO_0000321589" description="Dihydroxy-acid dehydratase">
    <location>
        <begin position="1"/>
        <end position="613"/>
    </location>
</feature>
<feature type="active site" description="Proton acceptor" evidence="1">
    <location>
        <position position="517"/>
    </location>
</feature>
<feature type="binding site" evidence="1">
    <location>
        <position position="81"/>
    </location>
    <ligand>
        <name>Mg(2+)</name>
        <dbReference type="ChEBI" id="CHEBI:18420"/>
    </ligand>
</feature>
<feature type="binding site" evidence="1">
    <location>
        <position position="122"/>
    </location>
    <ligand>
        <name>[2Fe-2S] cluster</name>
        <dbReference type="ChEBI" id="CHEBI:190135"/>
    </ligand>
</feature>
<feature type="binding site" evidence="1">
    <location>
        <position position="123"/>
    </location>
    <ligand>
        <name>Mg(2+)</name>
        <dbReference type="ChEBI" id="CHEBI:18420"/>
    </ligand>
</feature>
<feature type="binding site" description="via carbamate group" evidence="1">
    <location>
        <position position="124"/>
    </location>
    <ligand>
        <name>Mg(2+)</name>
        <dbReference type="ChEBI" id="CHEBI:18420"/>
    </ligand>
</feature>
<feature type="binding site" evidence="1">
    <location>
        <position position="195"/>
    </location>
    <ligand>
        <name>[2Fe-2S] cluster</name>
        <dbReference type="ChEBI" id="CHEBI:190135"/>
    </ligand>
</feature>
<feature type="binding site" evidence="1">
    <location>
        <position position="491"/>
    </location>
    <ligand>
        <name>Mg(2+)</name>
        <dbReference type="ChEBI" id="CHEBI:18420"/>
    </ligand>
</feature>
<feature type="modified residue" description="N6-carboxylysine" evidence="1">
    <location>
        <position position="124"/>
    </location>
</feature>
<comment type="function">
    <text evidence="1">Functions in the biosynthesis of branched-chain amino acids. Catalyzes the dehydration of (2R,3R)-2,3-dihydroxy-3-methylpentanoate (2,3-dihydroxy-3-methylvalerate) into 2-oxo-3-methylpentanoate (2-oxo-3-methylvalerate) and of (2R)-2,3-dihydroxy-3-methylbutanoate (2,3-dihydroxyisovalerate) into 2-oxo-3-methylbutanoate (2-oxoisovalerate), the penultimate precursor to L-isoleucine and L-valine, respectively.</text>
</comment>
<comment type="catalytic activity">
    <reaction evidence="1">
        <text>(2R)-2,3-dihydroxy-3-methylbutanoate = 3-methyl-2-oxobutanoate + H2O</text>
        <dbReference type="Rhea" id="RHEA:24809"/>
        <dbReference type="ChEBI" id="CHEBI:11851"/>
        <dbReference type="ChEBI" id="CHEBI:15377"/>
        <dbReference type="ChEBI" id="CHEBI:49072"/>
        <dbReference type="EC" id="4.2.1.9"/>
    </reaction>
    <physiologicalReaction direction="left-to-right" evidence="1">
        <dbReference type="Rhea" id="RHEA:24810"/>
    </physiologicalReaction>
</comment>
<comment type="catalytic activity">
    <reaction evidence="1">
        <text>(2R,3R)-2,3-dihydroxy-3-methylpentanoate = (S)-3-methyl-2-oxopentanoate + H2O</text>
        <dbReference type="Rhea" id="RHEA:27694"/>
        <dbReference type="ChEBI" id="CHEBI:15377"/>
        <dbReference type="ChEBI" id="CHEBI:35146"/>
        <dbReference type="ChEBI" id="CHEBI:49258"/>
        <dbReference type="EC" id="4.2.1.9"/>
    </reaction>
    <physiologicalReaction direction="left-to-right" evidence="1">
        <dbReference type="Rhea" id="RHEA:27695"/>
    </physiologicalReaction>
</comment>
<comment type="cofactor">
    <cofactor evidence="1">
        <name>[2Fe-2S] cluster</name>
        <dbReference type="ChEBI" id="CHEBI:190135"/>
    </cofactor>
    <text evidence="1">Binds 1 [2Fe-2S] cluster per subunit. This cluster acts as a Lewis acid cofactor.</text>
</comment>
<comment type="cofactor">
    <cofactor evidence="1">
        <name>Mg(2+)</name>
        <dbReference type="ChEBI" id="CHEBI:18420"/>
    </cofactor>
</comment>
<comment type="pathway">
    <text evidence="1">Amino-acid biosynthesis; L-isoleucine biosynthesis; L-isoleucine from 2-oxobutanoate: step 3/4.</text>
</comment>
<comment type="pathway">
    <text evidence="1">Amino-acid biosynthesis; L-valine biosynthesis; L-valine from pyruvate: step 3/4.</text>
</comment>
<comment type="subunit">
    <text evidence="1">Homodimer.</text>
</comment>
<comment type="similarity">
    <text evidence="1">Belongs to the IlvD/Edd family.</text>
</comment>
<comment type="sequence caution" evidence="2">
    <conflict type="erroneous initiation">
        <sequence resource="EMBL-CDS" id="ABK36292"/>
    </conflict>
</comment>
<evidence type="ECO:0000255" key="1">
    <source>
        <dbReference type="HAMAP-Rule" id="MF_00012"/>
    </source>
</evidence>
<evidence type="ECO:0000305" key="2"/>